<proteinExistence type="inferred from homology"/>
<sequence>MCGIVGVVGSKNATDILMQGLEKLEYRGYDSAGIFVNGQETAAKLVKSVGRIADLRGKLGIDVSGTAGIGHTRWATHGKPTEDNAHPHTSTSGRFILVHNGVIENFVELKNEFLMNDTFKGQTDTEIAVHLIAKFAEEEGLSTLEAFKKALSLIQGSYAFALMDSEDAEVIYVAKNKSPLLIGLGEGYNMVCSDAMAMIRETSEFMEIHDKELVVLTKDNVTVMDYEGNVLSRESYTAELDLSDIGKGTYPFYMLKEIDEQPAVMRKLIATYANEDGTMKVDQDIIKGIQEADRIYIIAAGTSYHAGFGAKMMLESLTNTPVELGLASEWGYDMPLLSQKPFFIFLSQSGETADSRQVLVKVNELGLPSLTVTNVPGSTLSREATYTMLIGAGPEIAVASTKAYTGQIATLAFLAKAVGEAEGEVKAKEFDLVKELSLVAQSIEATLSEKDEIAAIVADLLPTTRNAFYIGRKQDYYVAMEASLKLKEISYIQCEGFAAGELKHGTISLIEKGTPVLALISNNEEVAAHTRGNVMETVARGASAITIVEEGVAREDDTIVVNQVHPYLSAISMVIPTQLIAYYASMQRGLDVDKPRNLAKAVTVE</sequence>
<reference key="1">
    <citation type="journal article" date="2001" name="Genome Res.">
        <title>The complete genome sequence of the lactic acid bacterium Lactococcus lactis ssp. lactis IL1403.</title>
        <authorList>
            <person name="Bolotin A."/>
            <person name="Wincker P."/>
            <person name="Mauger S."/>
            <person name="Jaillon O."/>
            <person name="Malarme K."/>
            <person name="Weissenbach J."/>
            <person name="Ehrlich S.D."/>
            <person name="Sorokin A."/>
        </authorList>
    </citation>
    <scope>NUCLEOTIDE SEQUENCE [LARGE SCALE GENOMIC DNA]</scope>
    <source>
        <strain>IL1403</strain>
    </source>
</reference>
<name>GLMS_LACLA</name>
<keyword id="KW-0032">Aminotransferase</keyword>
<keyword id="KW-0963">Cytoplasm</keyword>
<keyword id="KW-0315">Glutamine amidotransferase</keyword>
<keyword id="KW-1185">Reference proteome</keyword>
<keyword id="KW-0677">Repeat</keyword>
<keyword id="KW-0808">Transferase</keyword>
<protein>
    <recommendedName>
        <fullName evidence="1">Glutamine--fructose-6-phosphate aminotransferase [isomerizing]</fullName>
        <ecNumber evidence="1">2.6.1.16</ecNumber>
    </recommendedName>
    <alternativeName>
        <fullName evidence="1">D-fructose-6-phosphate amidotransferase</fullName>
    </alternativeName>
    <alternativeName>
        <fullName evidence="1">GFAT</fullName>
    </alternativeName>
    <alternativeName>
        <fullName evidence="1">Glucosamine-6-phosphate synthase</fullName>
    </alternativeName>
    <alternativeName>
        <fullName evidence="1">Hexosephosphate aminotransferase</fullName>
    </alternativeName>
    <alternativeName>
        <fullName evidence="1">L-glutamine--D-fructose-6-phosphate amidotransferase</fullName>
    </alternativeName>
</protein>
<organism>
    <name type="scientific">Lactococcus lactis subsp. lactis (strain IL1403)</name>
    <name type="common">Streptococcus lactis</name>
    <dbReference type="NCBI Taxonomy" id="272623"/>
    <lineage>
        <taxon>Bacteria</taxon>
        <taxon>Bacillati</taxon>
        <taxon>Bacillota</taxon>
        <taxon>Bacilli</taxon>
        <taxon>Lactobacillales</taxon>
        <taxon>Streptococcaceae</taxon>
        <taxon>Lactococcus</taxon>
    </lineage>
</organism>
<feature type="initiator methionine" description="Removed" evidence="1">
    <location>
        <position position="1"/>
    </location>
</feature>
<feature type="chain" id="PRO_0000135343" description="Glutamine--fructose-6-phosphate aminotransferase [isomerizing]">
    <location>
        <begin position="2"/>
        <end position="605"/>
    </location>
</feature>
<feature type="domain" description="Glutamine amidotransferase type-2" evidence="1">
    <location>
        <begin position="2"/>
        <end position="219"/>
    </location>
</feature>
<feature type="domain" description="SIS 1" evidence="1">
    <location>
        <begin position="285"/>
        <end position="424"/>
    </location>
</feature>
<feature type="domain" description="SIS 2" evidence="1">
    <location>
        <begin position="457"/>
        <end position="595"/>
    </location>
</feature>
<feature type="active site" description="Nucleophile; for GATase activity" evidence="1">
    <location>
        <position position="2"/>
    </location>
</feature>
<feature type="active site" description="For Fru-6P isomerization activity" evidence="1">
    <location>
        <position position="600"/>
    </location>
</feature>
<dbReference type="EC" id="2.6.1.16" evidence="1"/>
<dbReference type="EMBL" id="AE005176">
    <property type="protein sequence ID" value="AAK05104.1"/>
    <property type="molecule type" value="Genomic_DNA"/>
</dbReference>
<dbReference type="PIR" id="F86750">
    <property type="entry name" value="F86750"/>
</dbReference>
<dbReference type="RefSeq" id="NP_267162.1">
    <property type="nucleotide sequence ID" value="NC_002662.1"/>
</dbReference>
<dbReference type="RefSeq" id="WP_010905678.1">
    <property type="nucleotide sequence ID" value="NC_002662.1"/>
</dbReference>
<dbReference type="SMR" id="Q9CGT6"/>
<dbReference type="MEROPS" id="C44.A08"/>
<dbReference type="PaxDb" id="272623-L33556"/>
<dbReference type="EnsemblBacteria" id="AAK05104">
    <property type="protein sequence ID" value="AAK05104"/>
    <property type="gene ID" value="L33556"/>
</dbReference>
<dbReference type="KEGG" id="lla:L33556"/>
<dbReference type="PATRIC" id="fig|272623.7.peg.1076"/>
<dbReference type="eggNOG" id="COG0449">
    <property type="taxonomic scope" value="Bacteria"/>
</dbReference>
<dbReference type="HOGENOM" id="CLU_012520_7_1_9"/>
<dbReference type="OrthoDB" id="106547at2"/>
<dbReference type="Proteomes" id="UP000002196">
    <property type="component" value="Chromosome"/>
</dbReference>
<dbReference type="GO" id="GO:0005829">
    <property type="term" value="C:cytosol"/>
    <property type="evidence" value="ECO:0007669"/>
    <property type="project" value="TreeGrafter"/>
</dbReference>
<dbReference type="GO" id="GO:0097367">
    <property type="term" value="F:carbohydrate derivative binding"/>
    <property type="evidence" value="ECO:0007669"/>
    <property type="project" value="InterPro"/>
</dbReference>
<dbReference type="GO" id="GO:0004360">
    <property type="term" value="F:glutamine-fructose-6-phosphate transaminase (isomerizing) activity"/>
    <property type="evidence" value="ECO:0007669"/>
    <property type="project" value="UniProtKB-UniRule"/>
</dbReference>
<dbReference type="GO" id="GO:0005975">
    <property type="term" value="P:carbohydrate metabolic process"/>
    <property type="evidence" value="ECO:0007669"/>
    <property type="project" value="UniProtKB-UniRule"/>
</dbReference>
<dbReference type="GO" id="GO:0006002">
    <property type="term" value="P:fructose 6-phosphate metabolic process"/>
    <property type="evidence" value="ECO:0007669"/>
    <property type="project" value="TreeGrafter"/>
</dbReference>
<dbReference type="GO" id="GO:0006487">
    <property type="term" value="P:protein N-linked glycosylation"/>
    <property type="evidence" value="ECO:0007669"/>
    <property type="project" value="TreeGrafter"/>
</dbReference>
<dbReference type="GO" id="GO:0006047">
    <property type="term" value="P:UDP-N-acetylglucosamine metabolic process"/>
    <property type="evidence" value="ECO:0007669"/>
    <property type="project" value="TreeGrafter"/>
</dbReference>
<dbReference type="CDD" id="cd00714">
    <property type="entry name" value="GFAT"/>
    <property type="match status" value="1"/>
</dbReference>
<dbReference type="CDD" id="cd05008">
    <property type="entry name" value="SIS_GlmS_GlmD_1"/>
    <property type="match status" value="1"/>
</dbReference>
<dbReference type="CDD" id="cd05009">
    <property type="entry name" value="SIS_GlmS_GlmD_2"/>
    <property type="match status" value="1"/>
</dbReference>
<dbReference type="FunFam" id="3.40.50.10490:FF:000001">
    <property type="entry name" value="Glutamine--fructose-6-phosphate aminotransferase [isomerizing]"/>
    <property type="match status" value="1"/>
</dbReference>
<dbReference type="FunFam" id="3.40.50.10490:FF:000022">
    <property type="entry name" value="Glutamine--fructose-6-phosphate aminotransferase [isomerizing]"/>
    <property type="match status" value="1"/>
</dbReference>
<dbReference type="FunFam" id="3.60.20.10:FF:000006">
    <property type="entry name" value="Glutamine--fructose-6-phosphate aminotransferase [isomerizing]"/>
    <property type="match status" value="1"/>
</dbReference>
<dbReference type="Gene3D" id="3.40.50.10490">
    <property type="entry name" value="Glucose-6-phosphate isomerase like protein, domain 1"/>
    <property type="match status" value="2"/>
</dbReference>
<dbReference type="Gene3D" id="3.60.20.10">
    <property type="entry name" value="Glutamine Phosphoribosylpyrophosphate, subunit 1, domain 1"/>
    <property type="match status" value="1"/>
</dbReference>
<dbReference type="HAMAP" id="MF_00164">
    <property type="entry name" value="GlmS"/>
    <property type="match status" value="1"/>
</dbReference>
<dbReference type="InterPro" id="IPR017932">
    <property type="entry name" value="GATase_2_dom"/>
</dbReference>
<dbReference type="InterPro" id="IPR005855">
    <property type="entry name" value="GFAT"/>
</dbReference>
<dbReference type="InterPro" id="IPR047084">
    <property type="entry name" value="GFAT_N"/>
</dbReference>
<dbReference type="InterPro" id="IPR035466">
    <property type="entry name" value="GlmS/AgaS_SIS"/>
</dbReference>
<dbReference type="InterPro" id="IPR035490">
    <property type="entry name" value="GlmS/FrlB_SIS"/>
</dbReference>
<dbReference type="InterPro" id="IPR029055">
    <property type="entry name" value="Ntn_hydrolases_N"/>
</dbReference>
<dbReference type="InterPro" id="IPR001347">
    <property type="entry name" value="SIS_dom"/>
</dbReference>
<dbReference type="InterPro" id="IPR046348">
    <property type="entry name" value="SIS_dom_sf"/>
</dbReference>
<dbReference type="NCBIfam" id="TIGR01135">
    <property type="entry name" value="glmS"/>
    <property type="match status" value="1"/>
</dbReference>
<dbReference type="NCBIfam" id="NF001484">
    <property type="entry name" value="PRK00331.1"/>
    <property type="match status" value="1"/>
</dbReference>
<dbReference type="PANTHER" id="PTHR10937">
    <property type="entry name" value="GLUCOSAMINE--FRUCTOSE-6-PHOSPHATE AMINOTRANSFERASE, ISOMERIZING"/>
    <property type="match status" value="1"/>
</dbReference>
<dbReference type="PANTHER" id="PTHR10937:SF0">
    <property type="entry name" value="GLUTAMINE--FRUCTOSE-6-PHOSPHATE TRANSAMINASE (ISOMERIZING)"/>
    <property type="match status" value="1"/>
</dbReference>
<dbReference type="Pfam" id="PF13522">
    <property type="entry name" value="GATase_6"/>
    <property type="match status" value="1"/>
</dbReference>
<dbReference type="Pfam" id="PF01380">
    <property type="entry name" value="SIS"/>
    <property type="match status" value="2"/>
</dbReference>
<dbReference type="SUPFAM" id="SSF56235">
    <property type="entry name" value="N-terminal nucleophile aminohydrolases (Ntn hydrolases)"/>
    <property type="match status" value="1"/>
</dbReference>
<dbReference type="SUPFAM" id="SSF53697">
    <property type="entry name" value="SIS domain"/>
    <property type="match status" value="1"/>
</dbReference>
<dbReference type="PROSITE" id="PS51278">
    <property type="entry name" value="GATASE_TYPE_2"/>
    <property type="match status" value="1"/>
</dbReference>
<dbReference type="PROSITE" id="PS51464">
    <property type="entry name" value="SIS"/>
    <property type="match status" value="2"/>
</dbReference>
<accession>Q9CGT6</accession>
<comment type="function">
    <text evidence="1">Catalyzes the first step in hexosamine metabolism, converting fructose-6P into glucosamine-6P using glutamine as a nitrogen source.</text>
</comment>
<comment type="catalytic activity">
    <reaction evidence="1">
        <text>D-fructose 6-phosphate + L-glutamine = D-glucosamine 6-phosphate + L-glutamate</text>
        <dbReference type="Rhea" id="RHEA:13237"/>
        <dbReference type="ChEBI" id="CHEBI:29985"/>
        <dbReference type="ChEBI" id="CHEBI:58359"/>
        <dbReference type="ChEBI" id="CHEBI:58725"/>
        <dbReference type="ChEBI" id="CHEBI:61527"/>
        <dbReference type="EC" id="2.6.1.16"/>
    </reaction>
</comment>
<comment type="subunit">
    <text evidence="1">Homodimer.</text>
</comment>
<comment type="subcellular location">
    <subcellularLocation>
        <location evidence="1">Cytoplasm</location>
    </subcellularLocation>
</comment>
<evidence type="ECO:0000255" key="1">
    <source>
        <dbReference type="HAMAP-Rule" id="MF_00164"/>
    </source>
</evidence>
<gene>
    <name evidence="1" type="primary">glmS</name>
    <name type="ordered locus">LL1006</name>
    <name type="ORF">L33556</name>
</gene>